<evidence type="ECO:0000255" key="1">
    <source>
        <dbReference type="HAMAP-Rule" id="MF_00818"/>
    </source>
</evidence>
<reference key="1">
    <citation type="journal article" date="2015" name="Proc. Natl. Acad. Sci. U.S.A.">
        <title>Trichodesmium genome maintains abundant, widespread noncoding DNA in situ, despite oligotrophic lifestyle.</title>
        <authorList>
            <person name="Walworth N."/>
            <person name="Pfreundt U."/>
            <person name="Nelson W.C."/>
            <person name="Mincer T."/>
            <person name="Heidelberg J.F."/>
            <person name="Fu F."/>
            <person name="Waterbury J.B."/>
            <person name="Glavina del Rio T."/>
            <person name="Goodwin L."/>
            <person name="Kyrpides N.C."/>
            <person name="Land M.L."/>
            <person name="Woyke T."/>
            <person name="Hutchins D.A."/>
            <person name="Hess W.R."/>
            <person name="Webb E.A."/>
        </authorList>
    </citation>
    <scope>NUCLEOTIDE SEQUENCE [LARGE SCALE GENOMIC DNA]</scope>
    <source>
        <strain>IMS101</strain>
    </source>
</reference>
<feature type="chain" id="PRO_1000083842" description="NADPH-dependent 7-cyano-7-deazaguanine reductase">
    <location>
        <begin position="1"/>
        <end position="141"/>
    </location>
</feature>
<feature type="active site" description="Thioimide intermediate" evidence="1">
    <location>
        <position position="56"/>
    </location>
</feature>
<feature type="active site" description="Proton donor" evidence="1">
    <location>
        <position position="63"/>
    </location>
</feature>
<feature type="binding site" evidence="1">
    <location>
        <begin position="78"/>
        <end position="80"/>
    </location>
    <ligand>
        <name>substrate</name>
    </ligand>
</feature>
<feature type="binding site" evidence="1">
    <location>
        <begin position="97"/>
        <end position="98"/>
    </location>
    <ligand>
        <name>substrate</name>
    </ligand>
</feature>
<gene>
    <name evidence="1" type="primary">queF</name>
    <name type="ordered locus">Tery_2098</name>
</gene>
<protein>
    <recommendedName>
        <fullName evidence="1">NADPH-dependent 7-cyano-7-deazaguanine reductase</fullName>
        <ecNumber evidence="1">1.7.1.13</ecNumber>
    </recommendedName>
    <alternativeName>
        <fullName evidence="1">7-cyano-7-carbaguanine reductase</fullName>
    </alternativeName>
    <alternativeName>
        <fullName evidence="1">NADPH-dependent nitrile oxidoreductase</fullName>
    </alternativeName>
    <alternativeName>
        <fullName evidence="1">PreQ(0) reductase</fullName>
    </alternativeName>
</protein>
<organism>
    <name type="scientific">Trichodesmium erythraeum (strain IMS101)</name>
    <dbReference type="NCBI Taxonomy" id="203124"/>
    <lineage>
        <taxon>Bacteria</taxon>
        <taxon>Bacillati</taxon>
        <taxon>Cyanobacteriota</taxon>
        <taxon>Cyanophyceae</taxon>
        <taxon>Oscillatoriophycideae</taxon>
        <taxon>Oscillatoriales</taxon>
        <taxon>Microcoleaceae</taxon>
        <taxon>Trichodesmium</taxon>
    </lineage>
</organism>
<sequence>MNYDETNNELFQESNMQELKYGERNILEGELITFPNPRIGRRYEINISLPEFTCKCPFSGYPDFATIHIKYIPNERVVELKAIKLYINSYRERYISHEESVNQILDDFVAACDPLEVKIKGDFLPRGNVHTTIEVEHYKAS</sequence>
<keyword id="KW-0963">Cytoplasm</keyword>
<keyword id="KW-0521">NADP</keyword>
<keyword id="KW-0560">Oxidoreductase</keyword>
<keyword id="KW-0671">Queuosine biosynthesis</keyword>
<comment type="function">
    <text evidence="1">Catalyzes the NADPH-dependent reduction of 7-cyano-7-deazaguanine (preQ0) to 7-aminomethyl-7-deazaguanine (preQ1).</text>
</comment>
<comment type="catalytic activity">
    <reaction evidence="1">
        <text>7-aminomethyl-7-carbaguanine + 2 NADP(+) = 7-cyano-7-deazaguanine + 2 NADPH + 3 H(+)</text>
        <dbReference type="Rhea" id="RHEA:13409"/>
        <dbReference type="ChEBI" id="CHEBI:15378"/>
        <dbReference type="ChEBI" id="CHEBI:45075"/>
        <dbReference type="ChEBI" id="CHEBI:57783"/>
        <dbReference type="ChEBI" id="CHEBI:58349"/>
        <dbReference type="ChEBI" id="CHEBI:58703"/>
        <dbReference type="EC" id="1.7.1.13"/>
    </reaction>
</comment>
<comment type="pathway">
    <text evidence="1">tRNA modification; tRNA-queuosine biosynthesis.</text>
</comment>
<comment type="subcellular location">
    <subcellularLocation>
        <location evidence="1">Cytoplasm</location>
    </subcellularLocation>
</comment>
<comment type="similarity">
    <text evidence="1">Belongs to the GTP cyclohydrolase I family. QueF type 1 subfamily.</text>
</comment>
<dbReference type="EC" id="1.7.1.13" evidence="1"/>
<dbReference type="EMBL" id="CP000393">
    <property type="protein sequence ID" value="ABG51337.1"/>
    <property type="molecule type" value="Genomic_DNA"/>
</dbReference>
<dbReference type="RefSeq" id="WP_011611708.1">
    <property type="nucleotide sequence ID" value="NC_008312.1"/>
</dbReference>
<dbReference type="SMR" id="Q113I7"/>
<dbReference type="STRING" id="203124.Tery_2098"/>
<dbReference type="KEGG" id="ter:Tery_2098"/>
<dbReference type="eggNOG" id="COG0780">
    <property type="taxonomic scope" value="Bacteria"/>
</dbReference>
<dbReference type="HOGENOM" id="CLU_102489_1_1_3"/>
<dbReference type="OrthoDB" id="9795077at2"/>
<dbReference type="UniPathway" id="UPA00392"/>
<dbReference type="GO" id="GO:0005737">
    <property type="term" value="C:cytoplasm"/>
    <property type="evidence" value="ECO:0007669"/>
    <property type="project" value="UniProtKB-SubCell"/>
</dbReference>
<dbReference type="GO" id="GO:0033739">
    <property type="term" value="F:preQ1 synthase activity"/>
    <property type="evidence" value="ECO:0007669"/>
    <property type="project" value="UniProtKB-UniRule"/>
</dbReference>
<dbReference type="GO" id="GO:0008616">
    <property type="term" value="P:queuosine biosynthetic process"/>
    <property type="evidence" value="ECO:0007669"/>
    <property type="project" value="UniProtKB-UniRule"/>
</dbReference>
<dbReference type="GO" id="GO:0006400">
    <property type="term" value="P:tRNA modification"/>
    <property type="evidence" value="ECO:0007669"/>
    <property type="project" value="UniProtKB-UniRule"/>
</dbReference>
<dbReference type="Gene3D" id="3.30.1130.10">
    <property type="match status" value="1"/>
</dbReference>
<dbReference type="HAMAP" id="MF_00818">
    <property type="entry name" value="QueF_type1"/>
    <property type="match status" value="1"/>
</dbReference>
<dbReference type="InterPro" id="IPR043133">
    <property type="entry name" value="GTP-CH-I_C/QueF"/>
</dbReference>
<dbReference type="InterPro" id="IPR050084">
    <property type="entry name" value="NADPH_dep_7-cyano-7-deazaG_red"/>
</dbReference>
<dbReference type="InterPro" id="IPR029500">
    <property type="entry name" value="QueF"/>
</dbReference>
<dbReference type="InterPro" id="IPR016856">
    <property type="entry name" value="QueF_type1"/>
</dbReference>
<dbReference type="NCBIfam" id="TIGR03139">
    <property type="entry name" value="QueF-II"/>
    <property type="match status" value="1"/>
</dbReference>
<dbReference type="PANTHER" id="PTHR34354">
    <property type="entry name" value="NADPH-DEPENDENT 7-CYANO-7-DEAZAGUANINE REDUCTASE"/>
    <property type="match status" value="1"/>
</dbReference>
<dbReference type="PANTHER" id="PTHR34354:SF1">
    <property type="entry name" value="NADPH-DEPENDENT 7-CYANO-7-DEAZAGUANINE REDUCTASE"/>
    <property type="match status" value="1"/>
</dbReference>
<dbReference type="Pfam" id="PF14489">
    <property type="entry name" value="QueF"/>
    <property type="match status" value="1"/>
</dbReference>
<dbReference type="PIRSF" id="PIRSF027377">
    <property type="entry name" value="Nitrile_oxidored_QueF"/>
    <property type="match status" value="1"/>
</dbReference>
<dbReference type="SUPFAM" id="SSF55620">
    <property type="entry name" value="Tetrahydrobiopterin biosynthesis enzymes-like"/>
    <property type="match status" value="1"/>
</dbReference>
<accession>Q113I7</accession>
<proteinExistence type="inferred from homology"/>
<name>QUEF_TRIEI</name>